<proteinExistence type="inferred from homology"/>
<protein>
    <recommendedName>
        <fullName evidence="1">2-C-methyl-D-erythritol 4-phosphate cytidylyltransferase</fullName>
        <ecNumber evidence="1">2.7.7.60</ecNumber>
    </recommendedName>
    <alternativeName>
        <fullName evidence="1">4-diphosphocytidyl-2C-methyl-D-erythritol synthase</fullName>
    </alternativeName>
    <alternativeName>
        <fullName evidence="1">MEP cytidylyltransferase</fullName>
        <shortName evidence="1">MCT</shortName>
    </alternativeName>
</protein>
<keyword id="KW-0414">Isoprene biosynthesis</keyword>
<keyword id="KW-0548">Nucleotidyltransferase</keyword>
<keyword id="KW-1185">Reference proteome</keyword>
<keyword id="KW-0808">Transferase</keyword>
<organism>
    <name type="scientific">Corynebacterium glutamicum (strain ATCC 13032 / DSM 20300 / JCM 1318 / BCRC 11384 / CCUG 27702 / LMG 3730 / NBRC 12168 / NCIMB 10025 / NRRL B-2784 / 534)</name>
    <dbReference type="NCBI Taxonomy" id="196627"/>
    <lineage>
        <taxon>Bacteria</taxon>
        <taxon>Bacillati</taxon>
        <taxon>Actinomycetota</taxon>
        <taxon>Actinomycetes</taxon>
        <taxon>Mycobacteriales</taxon>
        <taxon>Corynebacteriaceae</taxon>
        <taxon>Corynebacterium</taxon>
    </lineage>
</organism>
<dbReference type="EC" id="2.7.7.60" evidence="1"/>
<dbReference type="EMBL" id="BA000036">
    <property type="protein sequence ID" value="BAC00054.1"/>
    <property type="molecule type" value="Genomic_DNA"/>
</dbReference>
<dbReference type="EMBL" id="BX927156">
    <property type="protein sequence ID" value="CAF20684.1"/>
    <property type="molecule type" value="Genomic_DNA"/>
</dbReference>
<dbReference type="RefSeq" id="NP_601859.1">
    <property type="nucleotide sequence ID" value="NC_003450.3"/>
</dbReference>
<dbReference type="RefSeq" id="WP_011015289.1">
    <property type="nucleotide sequence ID" value="NC_006958.1"/>
</dbReference>
<dbReference type="SMR" id="Q8NMB8"/>
<dbReference type="STRING" id="196627.cg2945"/>
<dbReference type="GeneID" id="1020608"/>
<dbReference type="KEGG" id="cgb:cg2945"/>
<dbReference type="KEGG" id="cgl:Cgl2660"/>
<dbReference type="PATRIC" id="fig|196627.13.peg.2595"/>
<dbReference type="eggNOG" id="COG1211">
    <property type="taxonomic scope" value="Bacteria"/>
</dbReference>
<dbReference type="HOGENOM" id="CLU_061281_1_1_11"/>
<dbReference type="OrthoDB" id="9802561at2"/>
<dbReference type="BioCyc" id="CORYNE:G18NG-12277-MONOMER"/>
<dbReference type="UniPathway" id="UPA00056">
    <property type="reaction ID" value="UER00093"/>
</dbReference>
<dbReference type="Proteomes" id="UP000000582">
    <property type="component" value="Chromosome"/>
</dbReference>
<dbReference type="Proteomes" id="UP000001009">
    <property type="component" value="Chromosome"/>
</dbReference>
<dbReference type="GO" id="GO:0050518">
    <property type="term" value="F:2-C-methyl-D-erythritol 4-phosphate cytidylyltransferase activity"/>
    <property type="evidence" value="ECO:0007669"/>
    <property type="project" value="UniProtKB-UniRule"/>
</dbReference>
<dbReference type="GO" id="GO:0019288">
    <property type="term" value="P:isopentenyl diphosphate biosynthetic process, methylerythritol 4-phosphate pathway"/>
    <property type="evidence" value="ECO:0007669"/>
    <property type="project" value="UniProtKB-UniRule"/>
</dbReference>
<dbReference type="CDD" id="cd02516">
    <property type="entry name" value="CDP-ME_synthetase"/>
    <property type="match status" value="1"/>
</dbReference>
<dbReference type="FunFam" id="3.90.550.10:FF:000003">
    <property type="entry name" value="2-C-methyl-D-erythritol 4-phosphate cytidylyltransferase"/>
    <property type="match status" value="1"/>
</dbReference>
<dbReference type="Gene3D" id="3.90.550.10">
    <property type="entry name" value="Spore Coat Polysaccharide Biosynthesis Protein SpsA, Chain A"/>
    <property type="match status" value="1"/>
</dbReference>
<dbReference type="HAMAP" id="MF_00108">
    <property type="entry name" value="IspD"/>
    <property type="match status" value="1"/>
</dbReference>
<dbReference type="InterPro" id="IPR001228">
    <property type="entry name" value="IspD"/>
</dbReference>
<dbReference type="InterPro" id="IPR034683">
    <property type="entry name" value="IspD/TarI"/>
</dbReference>
<dbReference type="InterPro" id="IPR050088">
    <property type="entry name" value="IspD/TarI_cytidylyltransf_bact"/>
</dbReference>
<dbReference type="InterPro" id="IPR018294">
    <property type="entry name" value="ISPD_synthase_CS"/>
</dbReference>
<dbReference type="InterPro" id="IPR029044">
    <property type="entry name" value="Nucleotide-diphossugar_trans"/>
</dbReference>
<dbReference type="NCBIfam" id="TIGR00453">
    <property type="entry name" value="ispD"/>
    <property type="match status" value="1"/>
</dbReference>
<dbReference type="PANTHER" id="PTHR32125">
    <property type="entry name" value="2-C-METHYL-D-ERYTHRITOL 4-PHOSPHATE CYTIDYLYLTRANSFERASE, CHLOROPLASTIC"/>
    <property type="match status" value="1"/>
</dbReference>
<dbReference type="PANTHER" id="PTHR32125:SF4">
    <property type="entry name" value="2-C-METHYL-D-ERYTHRITOL 4-PHOSPHATE CYTIDYLYLTRANSFERASE, CHLOROPLASTIC"/>
    <property type="match status" value="1"/>
</dbReference>
<dbReference type="Pfam" id="PF01128">
    <property type="entry name" value="IspD"/>
    <property type="match status" value="1"/>
</dbReference>
<dbReference type="SUPFAM" id="SSF53448">
    <property type="entry name" value="Nucleotide-diphospho-sugar transferases"/>
    <property type="match status" value="1"/>
</dbReference>
<dbReference type="PROSITE" id="PS01295">
    <property type="entry name" value="ISPD"/>
    <property type="match status" value="1"/>
</dbReference>
<gene>
    <name evidence="1" type="primary">ispD</name>
    <name type="ordered locus">Cgl2660</name>
    <name type="ordered locus">cg2945</name>
</gene>
<sequence>MSSTRIPVIALLAAAGRGTRLGGPIPKAFVTLRERTLLERSLQAMLTSESVDEIIILVSPDMETYARDLLRKRGLLNDPEGVRVRLVHGGGERADSVWAGLQAISLDDATPDAIVLIHDSARALTPPGMIARVVRKVHEGATAVIPVLPVSDTIKRVSPDGGVVVDTPNRAELRAVQTPQGFLLSELVAANEKFFADPNPGFIPTDDASLMEWYGADVVCVQGDPMAFKVTTPIDMMLAQRITDEAEPTIFEVPGD</sequence>
<evidence type="ECO:0000255" key="1">
    <source>
        <dbReference type="HAMAP-Rule" id="MF_00108"/>
    </source>
</evidence>
<comment type="function">
    <text evidence="1">Catalyzes the formation of 4-diphosphocytidyl-2-C-methyl-D-erythritol from CTP and 2-C-methyl-D-erythritol 4-phosphate (MEP).</text>
</comment>
<comment type="catalytic activity">
    <reaction evidence="1">
        <text>2-C-methyl-D-erythritol 4-phosphate + CTP + H(+) = 4-CDP-2-C-methyl-D-erythritol + diphosphate</text>
        <dbReference type="Rhea" id="RHEA:13429"/>
        <dbReference type="ChEBI" id="CHEBI:15378"/>
        <dbReference type="ChEBI" id="CHEBI:33019"/>
        <dbReference type="ChEBI" id="CHEBI:37563"/>
        <dbReference type="ChEBI" id="CHEBI:57823"/>
        <dbReference type="ChEBI" id="CHEBI:58262"/>
        <dbReference type="EC" id="2.7.7.60"/>
    </reaction>
</comment>
<comment type="pathway">
    <text evidence="1">Isoprenoid biosynthesis; isopentenyl diphosphate biosynthesis via DXP pathway; isopentenyl diphosphate from 1-deoxy-D-xylulose 5-phosphate: step 2/6.</text>
</comment>
<comment type="similarity">
    <text evidence="1">Belongs to the IspD/TarI cytidylyltransferase family. IspD subfamily.</text>
</comment>
<name>ISPD_CORGL</name>
<feature type="chain" id="PRO_0000075570" description="2-C-methyl-D-erythritol 4-phosphate cytidylyltransferase">
    <location>
        <begin position="1"/>
        <end position="256"/>
    </location>
</feature>
<feature type="site" description="Transition state stabilizer" evidence="1">
    <location>
        <position position="20"/>
    </location>
</feature>
<feature type="site" description="Transition state stabilizer" evidence="1">
    <location>
        <position position="27"/>
    </location>
</feature>
<feature type="site" description="Positions MEP for the nucleophilic attack" evidence="1">
    <location>
        <position position="170"/>
    </location>
</feature>
<feature type="site" description="Positions MEP for the nucleophilic attack" evidence="1">
    <location>
        <position position="229"/>
    </location>
</feature>
<accession>Q8NMB8</accession>
<reference key="1">
    <citation type="journal article" date="2003" name="Appl. Microbiol. Biotechnol.">
        <title>The Corynebacterium glutamicum genome: features and impacts on biotechnological processes.</title>
        <authorList>
            <person name="Ikeda M."/>
            <person name="Nakagawa S."/>
        </authorList>
    </citation>
    <scope>NUCLEOTIDE SEQUENCE [LARGE SCALE GENOMIC DNA]</scope>
    <source>
        <strain>ATCC 13032 / DSM 20300 / JCM 1318 / BCRC 11384 / CCUG 27702 / LMG 3730 / NBRC 12168 / NCIMB 10025 / NRRL B-2784 / 534</strain>
    </source>
</reference>
<reference key="2">
    <citation type="journal article" date="2003" name="J. Biotechnol.">
        <title>The complete Corynebacterium glutamicum ATCC 13032 genome sequence and its impact on the production of L-aspartate-derived amino acids and vitamins.</title>
        <authorList>
            <person name="Kalinowski J."/>
            <person name="Bathe B."/>
            <person name="Bartels D."/>
            <person name="Bischoff N."/>
            <person name="Bott M."/>
            <person name="Burkovski A."/>
            <person name="Dusch N."/>
            <person name="Eggeling L."/>
            <person name="Eikmanns B.J."/>
            <person name="Gaigalat L."/>
            <person name="Goesmann A."/>
            <person name="Hartmann M."/>
            <person name="Huthmacher K."/>
            <person name="Kraemer R."/>
            <person name="Linke B."/>
            <person name="McHardy A.C."/>
            <person name="Meyer F."/>
            <person name="Moeckel B."/>
            <person name="Pfefferle W."/>
            <person name="Puehler A."/>
            <person name="Rey D.A."/>
            <person name="Rueckert C."/>
            <person name="Rupp O."/>
            <person name="Sahm H."/>
            <person name="Wendisch V.F."/>
            <person name="Wiegraebe I."/>
            <person name="Tauch A."/>
        </authorList>
    </citation>
    <scope>NUCLEOTIDE SEQUENCE [LARGE SCALE GENOMIC DNA]</scope>
    <source>
        <strain>ATCC 13032 / DSM 20300 / JCM 1318 / BCRC 11384 / CCUG 27702 / LMG 3730 / NBRC 12168 / NCIMB 10025 / NRRL B-2784 / 534</strain>
    </source>
</reference>